<comment type="function">
    <text evidence="1">Vacuolar carboxypeptidase involved in degradation of small peptides. Digests preferentially peptides containing an aliphatic or hydrophobic residue in P1' position, as well as methionine, leucine or phenylalanine in P1 position of ester substrate (By similarity).</text>
</comment>
<comment type="catalytic activity">
    <reaction evidence="3">
        <text>Release of a C-terminal amino acid with broad specificity.</text>
        <dbReference type="EC" id="3.4.16.5"/>
    </reaction>
</comment>
<comment type="subcellular location">
    <subcellularLocation>
        <location evidence="1">Vacuole</location>
    </subcellularLocation>
</comment>
<comment type="similarity">
    <text evidence="4">Belongs to the peptidase S10 family.</text>
</comment>
<evidence type="ECO:0000250" key="1"/>
<evidence type="ECO:0000255" key="2"/>
<evidence type="ECO:0000255" key="3">
    <source>
        <dbReference type="PROSITE-ProRule" id="PRU10074"/>
    </source>
</evidence>
<evidence type="ECO:0000305" key="4"/>
<accession>B2AWD5</accession>
<accession>A0A090CWP9</accession>
<feature type="signal peptide" evidence="2">
    <location>
        <begin position="1"/>
        <end position="17"/>
    </location>
</feature>
<feature type="propeptide" id="PRO_0000407472" evidence="1">
    <location>
        <begin position="18"/>
        <end position="137"/>
    </location>
</feature>
<feature type="chain" id="PRO_0000407473" description="Carboxypeptidase Y homolog A">
    <location>
        <begin position="138"/>
        <end position="554"/>
    </location>
</feature>
<feature type="active site" evidence="3">
    <location>
        <position position="278"/>
    </location>
</feature>
<feature type="active site" evidence="3">
    <location>
        <position position="470"/>
    </location>
</feature>
<feature type="active site" evidence="3">
    <location>
        <position position="529"/>
    </location>
</feature>
<feature type="glycosylation site" description="N-linked (GlcNAc...) asparagine" evidence="2">
    <location>
        <position position="222"/>
    </location>
</feature>
<feature type="glycosylation site" description="N-linked (GlcNAc...) asparagine" evidence="2">
    <location>
        <position position="518"/>
    </location>
</feature>
<feature type="disulfide bond" evidence="1">
    <location>
        <begin position="191"/>
        <end position="431"/>
    </location>
</feature>
<feature type="disulfide bond" evidence="1">
    <location>
        <begin position="325"/>
        <end position="339"/>
    </location>
</feature>
<feature type="disulfide bond" evidence="1">
    <location>
        <begin position="349"/>
        <end position="372"/>
    </location>
</feature>
<feature type="disulfide bond" evidence="1">
    <location>
        <begin position="356"/>
        <end position="365"/>
    </location>
</feature>
<feature type="disulfide bond" evidence="1">
    <location>
        <begin position="394"/>
        <end position="401"/>
    </location>
</feature>
<dbReference type="EC" id="3.4.16.5"/>
<dbReference type="EMBL" id="CU633900">
    <property type="protein sequence ID" value="CAP68709.1"/>
    <property type="molecule type" value="Genomic_DNA"/>
</dbReference>
<dbReference type="EMBL" id="FO904942">
    <property type="protein sequence ID" value="CDP32179.1"/>
    <property type="molecule type" value="Genomic_DNA"/>
</dbReference>
<dbReference type="RefSeq" id="XP_001908036.1">
    <property type="nucleotide sequence ID" value="XM_001908001.1"/>
</dbReference>
<dbReference type="SMR" id="B2AWD5"/>
<dbReference type="FunCoup" id="B2AWD5">
    <property type="interactions" value="820"/>
</dbReference>
<dbReference type="STRING" id="515849.B2AWD5"/>
<dbReference type="ESTHER" id="podan-cbpya">
    <property type="family name" value="Carboxypeptidase_S10"/>
</dbReference>
<dbReference type="MEROPS" id="S10.001"/>
<dbReference type="GlyCosmos" id="B2AWD5">
    <property type="glycosylation" value="2 sites, No reported glycans"/>
</dbReference>
<dbReference type="GeneID" id="6192366"/>
<dbReference type="KEGG" id="pan:PODANSg5071"/>
<dbReference type="VEuPathDB" id="FungiDB:PODANS_7_6790"/>
<dbReference type="eggNOG" id="KOG1282">
    <property type="taxonomic scope" value="Eukaryota"/>
</dbReference>
<dbReference type="HOGENOM" id="CLU_008523_10_4_1"/>
<dbReference type="InParanoid" id="B2AWD5"/>
<dbReference type="OrthoDB" id="443318at2759"/>
<dbReference type="Proteomes" id="UP000001197">
    <property type="component" value="Chromosome 7"/>
</dbReference>
<dbReference type="GO" id="GO:0000324">
    <property type="term" value="C:fungal-type vacuole"/>
    <property type="evidence" value="ECO:0007669"/>
    <property type="project" value="TreeGrafter"/>
</dbReference>
<dbReference type="GO" id="GO:0004185">
    <property type="term" value="F:serine-type carboxypeptidase activity"/>
    <property type="evidence" value="ECO:0007669"/>
    <property type="project" value="UniProtKB-EC"/>
</dbReference>
<dbReference type="GO" id="GO:0006508">
    <property type="term" value="P:proteolysis"/>
    <property type="evidence" value="ECO:0007669"/>
    <property type="project" value="UniProtKB-KW"/>
</dbReference>
<dbReference type="FunFam" id="1.10.287.410:FF:000001">
    <property type="entry name" value="Carboxypeptidase Y"/>
    <property type="match status" value="1"/>
</dbReference>
<dbReference type="Gene3D" id="1.10.287.410">
    <property type="match status" value="1"/>
</dbReference>
<dbReference type="Gene3D" id="3.40.50.1820">
    <property type="entry name" value="alpha/beta hydrolase"/>
    <property type="match status" value="1"/>
</dbReference>
<dbReference type="InterPro" id="IPR029058">
    <property type="entry name" value="AB_hydrolase_fold"/>
</dbReference>
<dbReference type="InterPro" id="IPR001563">
    <property type="entry name" value="Peptidase_S10"/>
</dbReference>
<dbReference type="InterPro" id="IPR008442">
    <property type="entry name" value="Propeptide_carboxypepY"/>
</dbReference>
<dbReference type="InterPro" id="IPR018202">
    <property type="entry name" value="Ser_caboxypep_ser_AS"/>
</dbReference>
<dbReference type="PANTHER" id="PTHR11802:SF113">
    <property type="entry name" value="SERINE CARBOXYPEPTIDASE CTSA-4.1"/>
    <property type="match status" value="1"/>
</dbReference>
<dbReference type="PANTHER" id="PTHR11802">
    <property type="entry name" value="SERINE PROTEASE FAMILY S10 SERINE CARBOXYPEPTIDASE"/>
    <property type="match status" value="1"/>
</dbReference>
<dbReference type="Pfam" id="PF05388">
    <property type="entry name" value="Carbpep_Y_N"/>
    <property type="match status" value="1"/>
</dbReference>
<dbReference type="Pfam" id="PF00450">
    <property type="entry name" value="Peptidase_S10"/>
    <property type="match status" value="1"/>
</dbReference>
<dbReference type="PRINTS" id="PR00724">
    <property type="entry name" value="CRBOXYPTASEC"/>
</dbReference>
<dbReference type="SUPFAM" id="SSF53474">
    <property type="entry name" value="alpha/beta-Hydrolases"/>
    <property type="match status" value="1"/>
</dbReference>
<dbReference type="PROSITE" id="PS00131">
    <property type="entry name" value="CARBOXYPEPT_SER_SER"/>
    <property type="match status" value="1"/>
</dbReference>
<keyword id="KW-0121">Carboxypeptidase</keyword>
<keyword id="KW-1015">Disulfide bond</keyword>
<keyword id="KW-0325">Glycoprotein</keyword>
<keyword id="KW-0378">Hydrolase</keyword>
<keyword id="KW-0645">Protease</keyword>
<keyword id="KW-1185">Reference proteome</keyword>
<keyword id="KW-0732">Signal</keyword>
<keyword id="KW-0926">Vacuole</keyword>
<keyword id="KW-0865">Zymogen</keyword>
<gene>
    <name type="primary">CPYA</name>
    <name type="ordered locus">Pa_7_6790</name>
    <name type="ORF">PODANS_7_6790</name>
</gene>
<sequence length="554" mass="61984">MRVAASTVLLGVASAASFQQQTQHVLSSGYERAQAGMKPLAEQFVDAAGKPIANIEEAFHGMTAEVKALWDEIKLLVPESAFNHSNWFTKPKPARRRHDWDHVVKGADVQKLWVQGESGEDHRQVDGKLADFNLRVKAVDPSKLGVDKVKQYSGYLDDEANDKHLFYWFFESRNDPKNDPVVLWLNGGPGCSSLTGLFLELGPSSIDKKLKVVNNEFSWNNNASVIFLDQPVNVGYSYSGNSVSNTIAAGKDVYALLSLFFHQFPEYAKQDFHIAGESYAGHYIPVFASEILSHKNRNINLKSILIGNGLTDGLTQYEHYRPMACGKGGYPAVLDESECRSMDNALPRCQSLIQNCYDSGSVWSCVPASIYCNNALIGPYQRTGQNVYDIRGKCEDSSNLCYSALGWISDYLNQQDVMDALGVEVSGYESCNFDINRNFLFQGDWMQPFHRLVPNILKEIPVLIYAGDADYICNWLGNQAWTEALEWPGKKNFNKASIKDLKLAGAEKEYGKVKASGNFTFMQVYQAGHMVPMDQPENSLDFLNRWLGGEWFAK</sequence>
<proteinExistence type="inferred from homology"/>
<protein>
    <recommendedName>
        <fullName>Carboxypeptidase Y homolog A</fullName>
        <ecNumber>3.4.16.5</ecNumber>
    </recommendedName>
</protein>
<reference key="1">
    <citation type="journal article" date="2008" name="Genome Biol.">
        <title>The genome sequence of the model ascomycete fungus Podospora anserina.</title>
        <authorList>
            <person name="Espagne E."/>
            <person name="Lespinet O."/>
            <person name="Malagnac F."/>
            <person name="Da Silva C."/>
            <person name="Jaillon O."/>
            <person name="Porcel B.M."/>
            <person name="Couloux A."/>
            <person name="Aury J.-M."/>
            <person name="Segurens B."/>
            <person name="Poulain J."/>
            <person name="Anthouard V."/>
            <person name="Grossetete S."/>
            <person name="Khalili H."/>
            <person name="Coppin E."/>
            <person name="Dequard-Chablat M."/>
            <person name="Picard M."/>
            <person name="Contamine V."/>
            <person name="Arnaise S."/>
            <person name="Bourdais A."/>
            <person name="Berteaux-Lecellier V."/>
            <person name="Gautheret D."/>
            <person name="de Vries R.P."/>
            <person name="Battaglia E."/>
            <person name="Coutinho P.M."/>
            <person name="Danchin E.G.J."/>
            <person name="Henrissat B."/>
            <person name="El Khoury R."/>
            <person name="Sainsard-Chanet A."/>
            <person name="Boivin A."/>
            <person name="Pinan-Lucarre B."/>
            <person name="Sellem C.H."/>
            <person name="Debuchy R."/>
            <person name="Wincker P."/>
            <person name="Weissenbach J."/>
            <person name="Silar P."/>
        </authorList>
    </citation>
    <scope>NUCLEOTIDE SEQUENCE [LARGE SCALE GENOMIC DNA]</scope>
    <source>
        <strain>S / ATCC MYA-4624 / DSM 980 / FGSC 10383</strain>
    </source>
</reference>
<reference key="2">
    <citation type="journal article" date="2014" name="Genetics">
        <title>Maintaining two mating types: Structure of the mating type locus and its role in heterokaryosis in Podospora anserina.</title>
        <authorList>
            <person name="Grognet P."/>
            <person name="Bidard F."/>
            <person name="Kuchly C."/>
            <person name="Tong L.C.H."/>
            <person name="Coppin E."/>
            <person name="Benkhali J.A."/>
            <person name="Couloux A."/>
            <person name="Wincker P."/>
            <person name="Debuchy R."/>
            <person name="Silar P."/>
        </authorList>
    </citation>
    <scope>GENOME REANNOTATION</scope>
    <source>
        <strain>S / ATCC MYA-4624 / DSM 980 / FGSC 10383</strain>
    </source>
</reference>
<organism>
    <name type="scientific">Podospora anserina (strain S / ATCC MYA-4624 / DSM 980 / FGSC 10383)</name>
    <name type="common">Pleurage anserina</name>
    <dbReference type="NCBI Taxonomy" id="515849"/>
    <lineage>
        <taxon>Eukaryota</taxon>
        <taxon>Fungi</taxon>
        <taxon>Dikarya</taxon>
        <taxon>Ascomycota</taxon>
        <taxon>Pezizomycotina</taxon>
        <taxon>Sordariomycetes</taxon>
        <taxon>Sordariomycetidae</taxon>
        <taxon>Sordariales</taxon>
        <taxon>Podosporaceae</taxon>
        <taxon>Podospora</taxon>
        <taxon>Podospora anserina</taxon>
    </lineage>
</organism>
<name>CBPYA_PODAN</name>